<proteinExistence type="evidence at protein level"/>
<name>VDAC_PEA</name>
<protein>
    <recommendedName>
        <fullName>Outer plastidial membrane protein porin</fullName>
    </recommendedName>
    <alternativeName>
        <fullName>Voltage-dependent anion-selective channel protein</fullName>
        <shortName>VDAC</shortName>
    </alternativeName>
</protein>
<feature type="initiator methionine" description="Removed" evidence="2">
    <location>
        <position position="1"/>
    </location>
</feature>
<feature type="chain" id="PRO_0000050530" description="Outer plastidial membrane protein porin">
    <location>
        <begin position="2"/>
        <end position="276"/>
    </location>
</feature>
<accession>P42054</accession>
<dbReference type="EMBL" id="Z25540">
    <property type="protein sequence ID" value="CAA80988.1"/>
    <property type="molecule type" value="mRNA"/>
</dbReference>
<dbReference type="PIR" id="S36454">
    <property type="entry name" value="S36454"/>
</dbReference>
<dbReference type="SMR" id="P42054"/>
<dbReference type="TCDB" id="1.B.8.1.5">
    <property type="family name" value="the mitochondrial and plastid porin (mpp) family"/>
</dbReference>
<dbReference type="EnsemblPlants" id="Psat3g195320.1">
    <property type="protein sequence ID" value="Psat3g195320.1.cds"/>
    <property type="gene ID" value="Psat3g195320"/>
</dbReference>
<dbReference type="Gramene" id="Psat3g195320.1">
    <property type="protein sequence ID" value="Psat3g195320.1.cds"/>
    <property type="gene ID" value="Psat3g195320"/>
</dbReference>
<dbReference type="OrthoDB" id="7827681at2759"/>
<dbReference type="GO" id="GO:0005741">
    <property type="term" value="C:mitochondrial outer membrane"/>
    <property type="evidence" value="ECO:0000314"/>
    <property type="project" value="AgBase"/>
</dbReference>
<dbReference type="GO" id="GO:0009527">
    <property type="term" value="C:plastid outer membrane"/>
    <property type="evidence" value="ECO:0007669"/>
    <property type="project" value="UniProtKB-SubCell"/>
</dbReference>
<dbReference type="GO" id="GO:0046930">
    <property type="term" value="C:pore complex"/>
    <property type="evidence" value="ECO:0007669"/>
    <property type="project" value="UniProtKB-KW"/>
</dbReference>
<dbReference type="GO" id="GO:0015288">
    <property type="term" value="F:porin activity"/>
    <property type="evidence" value="ECO:0007669"/>
    <property type="project" value="UniProtKB-KW"/>
</dbReference>
<dbReference type="GO" id="GO:0008308">
    <property type="term" value="F:voltage-gated monoatomic anion channel activity"/>
    <property type="evidence" value="ECO:0007669"/>
    <property type="project" value="InterPro"/>
</dbReference>
<dbReference type="CDD" id="cd07306">
    <property type="entry name" value="Porin3_VDAC"/>
    <property type="match status" value="1"/>
</dbReference>
<dbReference type="FunFam" id="2.40.160.10:FF:000003">
    <property type="entry name" value="Outer mitochondrial membrane protein porin"/>
    <property type="match status" value="1"/>
</dbReference>
<dbReference type="Gene3D" id="2.40.160.10">
    <property type="entry name" value="Porin"/>
    <property type="match status" value="1"/>
</dbReference>
<dbReference type="InterPro" id="IPR023614">
    <property type="entry name" value="Porin_dom_sf"/>
</dbReference>
<dbReference type="InterPro" id="IPR001925">
    <property type="entry name" value="Porin_Euk"/>
</dbReference>
<dbReference type="InterPro" id="IPR027246">
    <property type="entry name" value="Porin_Euk/Tom40"/>
</dbReference>
<dbReference type="PANTHER" id="PTHR11743:SF60">
    <property type="entry name" value="MITOCHONDRIAL OUTER MEMBRANE PROTEIN PORIN 1"/>
    <property type="match status" value="1"/>
</dbReference>
<dbReference type="PANTHER" id="PTHR11743">
    <property type="entry name" value="VOLTAGE-DEPENDENT ANION-SELECTIVE CHANNEL"/>
    <property type="match status" value="1"/>
</dbReference>
<dbReference type="Pfam" id="PF01459">
    <property type="entry name" value="Porin_3"/>
    <property type="match status" value="1"/>
</dbReference>
<dbReference type="PROSITE" id="PS00558">
    <property type="entry name" value="EUKARYOTIC_PORIN"/>
    <property type="match status" value="1"/>
</dbReference>
<gene>
    <name type="primary">POR1</name>
</gene>
<evidence type="ECO:0000250" key="1"/>
<evidence type="ECO:0000269" key="2">
    <source>
    </source>
</evidence>
<evidence type="ECO:0000305" key="3"/>
<organism>
    <name type="scientific">Pisum sativum</name>
    <name type="common">Garden pea</name>
    <name type="synonym">Lathyrus oleraceus</name>
    <dbReference type="NCBI Taxonomy" id="3888"/>
    <lineage>
        <taxon>Eukaryota</taxon>
        <taxon>Viridiplantae</taxon>
        <taxon>Streptophyta</taxon>
        <taxon>Embryophyta</taxon>
        <taxon>Tracheophyta</taxon>
        <taxon>Spermatophyta</taxon>
        <taxon>Magnoliopsida</taxon>
        <taxon>eudicotyledons</taxon>
        <taxon>Gunneridae</taxon>
        <taxon>Pentapetalae</taxon>
        <taxon>rosids</taxon>
        <taxon>fabids</taxon>
        <taxon>Fabales</taxon>
        <taxon>Fabaceae</taxon>
        <taxon>Papilionoideae</taxon>
        <taxon>50 kb inversion clade</taxon>
        <taxon>NPAAA clade</taxon>
        <taxon>Hologalegina</taxon>
        <taxon>IRL clade</taxon>
        <taxon>Fabeae</taxon>
        <taxon>Pisum</taxon>
    </lineage>
</organism>
<keyword id="KW-0903">Direct protein sequencing</keyword>
<keyword id="KW-0406">Ion transport</keyword>
<keyword id="KW-0472">Membrane</keyword>
<keyword id="KW-0934">Plastid</keyword>
<keyword id="KW-1002">Plastid outer membrane</keyword>
<keyword id="KW-0626">Porin</keyword>
<keyword id="KW-0812">Transmembrane</keyword>
<keyword id="KW-1134">Transmembrane beta strand</keyword>
<keyword id="KW-0813">Transport</keyword>
<reference key="1">
    <citation type="journal article" date="1994" name="J. Biol. Chem.">
        <title>Porins from plants. Molecular cloning and functional characterization of two new members of the porin family.</title>
        <authorList>
            <person name="Fischer K."/>
            <person name="Weber A."/>
            <person name="Brink S."/>
            <person name="Arbinger B."/>
            <person name="Schuenemann D."/>
            <person name="Borchert S."/>
            <person name="Heldt H.W."/>
            <person name="Popp B."/>
            <person name="Benz R."/>
            <person name="Link T."/>
            <person name="Eckerskorn C."/>
            <person name="Fluegge U.I."/>
        </authorList>
    </citation>
    <scope>NUCLEOTIDE SEQUENCE [MRNA]</scope>
    <scope>PROTEIN SEQUENCE OF 2-23; 158-166 AND 196-209</scope>
    <source>
        <strain>cv. Kleine Rheinlaenderin</strain>
        <tissue>Root</tissue>
    </source>
</reference>
<comment type="function">
    <text evidence="1">Forms a channel through the cell membrane that allows diffusion of small hydrophilic molecules. The channel adopts an open conformation at low or zero membrane potential and a closed conformation at potentials above 30-40 mV. The open state has a weak anion selectivity whereas the closed state is cation-selective (By similarity).</text>
</comment>
<comment type="subcellular location">
    <subcellularLocation>
        <location>Plastid outer membrane</location>
    </subcellularLocation>
    <text>Found in non-photosynthetic root plastids only.</text>
</comment>
<comment type="domain">
    <text>Consists mainly of membrane-spanning sided beta-sheets.</text>
</comment>
<comment type="similarity">
    <text evidence="3">Belongs to the eukaryotic mitochondrial porin (TC 1.B.8.1) family.</text>
</comment>
<sequence>MVKGPGLYTDIGKKARDLLYKDYHSDKKFTISTYSPTGVAITSSGTKKGELFLGDVNTQLKNKNITTDIKVDTNSNLFTTITVNEPAPGVKAILSFKVPEQTSGKVELQYLHEYAGISSSVGLKANPIVNFSSVIGTNALAFGADISFDTKLGELTKSNAAVNFVKDDLIGSLTLNEKGDLLSASYYHAINPLSNTAVGVDISHRFSTKENTFTLGTQHALDPLTTVKGRVTNSGKASALIQHEWRPKSLITISSEVDTKAIEKSAKIGLSLALKP</sequence>